<sequence>MGQKVHPNGIRLGIVKEHTSVWYADRKNYADYLFADLKVREYLQDKLKSASVSRIDIHRPAQTARITIHTARPGIVIGKKGEDVEKLRQDLTKQMGVPVHINIEEIRKPELDAMLVAQSVAQQLERRVMFRRAMKRAVQNAMRIGAKGIKIQVSGRLGGAEIARTEWYREGRVPLHTLRADIDYATYEAHTTYGVIGVKVWIFKGEVIGGRQEELKPVAPAPRKKAAR</sequence>
<protein>
    <recommendedName>
        <fullName evidence="1">Small ribosomal subunit protein uS3</fullName>
    </recommendedName>
    <alternativeName>
        <fullName evidence="2">30S ribosomal protein S3</fullName>
    </alternativeName>
</protein>
<reference key="1">
    <citation type="journal article" date="2006" name="Genome Biol.">
        <title>Genomic analysis reveals that Pseudomonas aeruginosa virulence is combinatorial.</title>
        <authorList>
            <person name="Lee D.G."/>
            <person name="Urbach J.M."/>
            <person name="Wu G."/>
            <person name="Liberati N.T."/>
            <person name="Feinbaum R.L."/>
            <person name="Miyata S."/>
            <person name="Diggins L.T."/>
            <person name="He J."/>
            <person name="Saucier M."/>
            <person name="Deziel E."/>
            <person name="Friedman L."/>
            <person name="Li L."/>
            <person name="Grills G."/>
            <person name="Montgomery K."/>
            <person name="Kucherlapati R."/>
            <person name="Rahme L.G."/>
            <person name="Ausubel F.M."/>
        </authorList>
    </citation>
    <scope>NUCLEOTIDE SEQUENCE [LARGE SCALE GENOMIC DNA]</scope>
    <source>
        <strain>UCBPP-PA14</strain>
    </source>
</reference>
<dbReference type="EMBL" id="CP000438">
    <property type="protein sequence ID" value="ABJ13528.1"/>
    <property type="molecule type" value="Genomic_DNA"/>
</dbReference>
<dbReference type="RefSeq" id="WP_003093727.1">
    <property type="nucleotide sequence ID" value="NZ_CP034244.1"/>
</dbReference>
<dbReference type="SMR" id="Q02T74"/>
<dbReference type="GeneID" id="77219204"/>
<dbReference type="KEGG" id="pau:PA14_08910"/>
<dbReference type="PseudoCAP" id="PA14_08910"/>
<dbReference type="HOGENOM" id="CLU_058591_0_2_6"/>
<dbReference type="BioCyc" id="PAER208963:G1G74-742-MONOMER"/>
<dbReference type="Proteomes" id="UP000000653">
    <property type="component" value="Chromosome"/>
</dbReference>
<dbReference type="GO" id="GO:0022627">
    <property type="term" value="C:cytosolic small ribosomal subunit"/>
    <property type="evidence" value="ECO:0007669"/>
    <property type="project" value="TreeGrafter"/>
</dbReference>
<dbReference type="GO" id="GO:0003729">
    <property type="term" value="F:mRNA binding"/>
    <property type="evidence" value="ECO:0007669"/>
    <property type="project" value="UniProtKB-UniRule"/>
</dbReference>
<dbReference type="GO" id="GO:0019843">
    <property type="term" value="F:rRNA binding"/>
    <property type="evidence" value="ECO:0007669"/>
    <property type="project" value="UniProtKB-UniRule"/>
</dbReference>
<dbReference type="GO" id="GO:0003735">
    <property type="term" value="F:structural constituent of ribosome"/>
    <property type="evidence" value="ECO:0007669"/>
    <property type="project" value="InterPro"/>
</dbReference>
<dbReference type="GO" id="GO:0006412">
    <property type="term" value="P:translation"/>
    <property type="evidence" value="ECO:0007669"/>
    <property type="project" value="UniProtKB-UniRule"/>
</dbReference>
<dbReference type="CDD" id="cd02412">
    <property type="entry name" value="KH-II_30S_S3"/>
    <property type="match status" value="1"/>
</dbReference>
<dbReference type="FunFam" id="3.30.1140.32:FF:000001">
    <property type="entry name" value="30S ribosomal protein S3"/>
    <property type="match status" value="1"/>
</dbReference>
<dbReference type="FunFam" id="3.30.300.20:FF:000001">
    <property type="entry name" value="30S ribosomal protein S3"/>
    <property type="match status" value="1"/>
</dbReference>
<dbReference type="Gene3D" id="3.30.300.20">
    <property type="match status" value="1"/>
</dbReference>
<dbReference type="Gene3D" id="3.30.1140.32">
    <property type="entry name" value="Ribosomal protein S3, C-terminal domain"/>
    <property type="match status" value="1"/>
</dbReference>
<dbReference type="HAMAP" id="MF_01309_B">
    <property type="entry name" value="Ribosomal_uS3_B"/>
    <property type="match status" value="1"/>
</dbReference>
<dbReference type="InterPro" id="IPR004087">
    <property type="entry name" value="KH_dom"/>
</dbReference>
<dbReference type="InterPro" id="IPR015946">
    <property type="entry name" value="KH_dom-like_a/b"/>
</dbReference>
<dbReference type="InterPro" id="IPR004044">
    <property type="entry name" value="KH_dom_type_2"/>
</dbReference>
<dbReference type="InterPro" id="IPR009019">
    <property type="entry name" value="KH_sf_prok-type"/>
</dbReference>
<dbReference type="InterPro" id="IPR036419">
    <property type="entry name" value="Ribosomal_S3_C_sf"/>
</dbReference>
<dbReference type="InterPro" id="IPR005704">
    <property type="entry name" value="Ribosomal_uS3_bac-typ"/>
</dbReference>
<dbReference type="InterPro" id="IPR001351">
    <property type="entry name" value="Ribosomal_uS3_C"/>
</dbReference>
<dbReference type="InterPro" id="IPR018280">
    <property type="entry name" value="Ribosomal_uS3_CS"/>
</dbReference>
<dbReference type="NCBIfam" id="TIGR01009">
    <property type="entry name" value="rpsC_bact"/>
    <property type="match status" value="1"/>
</dbReference>
<dbReference type="PANTHER" id="PTHR11760">
    <property type="entry name" value="30S/40S RIBOSOMAL PROTEIN S3"/>
    <property type="match status" value="1"/>
</dbReference>
<dbReference type="PANTHER" id="PTHR11760:SF19">
    <property type="entry name" value="SMALL RIBOSOMAL SUBUNIT PROTEIN US3C"/>
    <property type="match status" value="1"/>
</dbReference>
<dbReference type="Pfam" id="PF07650">
    <property type="entry name" value="KH_2"/>
    <property type="match status" value="1"/>
</dbReference>
<dbReference type="Pfam" id="PF00189">
    <property type="entry name" value="Ribosomal_S3_C"/>
    <property type="match status" value="1"/>
</dbReference>
<dbReference type="SMART" id="SM00322">
    <property type="entry name" value="KH"/>
    <property type="match status" value="1"/>
</dbReference>
<dbReference type="SUPFAM" id="SSF54814">
    <property type="entry name" value="Prokaryotic type KH domain (KH-domain type II)"/>
    <property type="match status" value="1"/>
</dbReference>
<dbReference type="SUPFAM" id="SSF54821">
    <property type="entry name" value="Ribosomal protein S3 C-terminal domain"/>
    <property type="match status" value="1"/>
</dbReference>
<dbReference type="PROSITE" id="PS50823">
    <property type="entry name" value="KH_TYPE_2"/>
    <property type="match status" value="1"/>
</dbReference>
<dbReference type="PROSITE" id="PS00548">
    <property type="entry name" value="RIBOSOMAL_S3"/>
    <property type="match status" value="1"/>
</dbReference>
<keyword id="KW-0687">Ribonucleoprotein</keyword>
<keyword id="KW-0689">Ribosomal protein</keyword>
<keyword id="KW-0694">RNA-binding</keyword>
<keyword id="KW-0699">rRNA-binding</keyword>
<comment type="function">
    <text evidence="1">Binds the lower part of the 30S subunit head. Binds mRNA in the 70S ribosome, positioning it for translation.</text>
</comment>
<comment type="subunit">
    <text evidence="1">Part of the 30S ribosomal subunit. Forms a tight complex with proteins S10 and S14.</text>
</comment>
<comment type="similarity">
    <text evidence="1">Belongs to the universal ribosomal protein uS3 family.</text>
</comment>
<evidence type="ECO:0000255" key="1">
    <source>
        <dbReference type="HAMAP-Rule" id="MF_01309"/>
    </source>
</evidence>
<evidence type="ECO:0000305" key="2"/>
<accession>Q02T74</accession>
<organism>
    <name type="scientific">Pseudomonas aeruginosa (strain UCBPP-PA14)</name>
    <dbReference type="NCBI Taxonomy" id="208963"/>
    <lineage>
        <taxon>Bacteria</taxon>
        <taxon>Pseudomonadati</taxon>
        <taxon>Pseudomonadota</taxon>
        <taxon>Gammaproteobacteria</taxon>
        <taxon>Pseudomonadales</taxon>
        <taxon>Pseudomonadaceae</taxon>
        <taxon>Pseudomonas</taxon>
    </lineage>
</organism>
<feature type="chain" id="PRO_0000293856" description="Small ribosomal subunit protein uS3">
    <location>
        <begin position="1"/>
        <end position="228"/>
    </location>
</feature>
<feature type="domain" description="KH type-2" evidence="1">
    <location>
        <begin position="39"/>
        <end position="107"/>
    </location>
</feature>
<proteinExistence type="inferred from homology"/>
<name>RS3_PSEAB</name>
<gene>
    <name evidence="1" type="primary">rpsC</name>
    <name type="ordered locus">PA14_08910</name>
</gene>